<protein>
    <recommendedName>
        <fullName evidence="1">Protein PB1-F2</fullName>
    </recommendedName>
</protein>
<name>PB1F2_I03A1</name>
<proteinExistence type="inferred from homology"/>
<accession>P0C5V8</accession>
<organismHost>
    <name type="scientific">Aves</name>
    <dbReference type="NCBI Taxonomy" id="8782"/>
</organismHost>
<organismHost>
    <name type="scientific">Felis catus</name>
    <name type="common">Cat</name>
    <name type="synonym">Felis silvestris catus</name>
    <dbReference type="NCBI Taxonomy" id="9685"/>
</organismHost>
<organismHost>
    <name type="scientific">Homo sapiens</name>
    <name type="common">Human</name>
    <dbReference type="NCBI Taxonomy" id="9606"/>
</organismHost>
<organismHost>
    <name type="scientific">Panthera pardus</name>
    <name type="common">Leopard</name>
    <name type="synonym">Felis pardus</name>
    <dbReference type="NCBI Taxonomy" id="9691"/>
</organismHost>
<organismHost>
    <name type="scientific">Panthera tigris</name>
    <name type="common">Tiger</name>
    <dbReference type="NCBI Taxonomy" id="9694"/>
</organismHost>
<organismHost>
    <name type="scientific">Sus scrofa</name>
    <name type="common">Pig</name>
    <dbReference type="NCBI Taxonomy" id="9823"/>
</organismHost>
<reference key="1">
    <citation type="journal article" date="2004" name="Nature">
        <title>Genesis of a highly pathogenic and potentially pandemic H5N1 influenza virus in eastern Asia.</title>
        <authorList>
            <person name="Li K.S."/>
            <person name="Guan Y."/>
            <person name="Wang J."/>
            <person name="Smith G.J.D."/>
            <person name="Xu K.M."/>
            <person name="Duan L."/>
            <person name="Rahardjo A.P."/>
            <person name="Puthavathana P."/>
            <person name="Buranathai C."/>
            <person name="Nguyen T.D."/>
            <person name="Estoepangestie A.T.S."/>
            <person name="Chaisingh A."/>
            <person name="Auewarakul P."/>
            <person name="Long H.T."/>
            <person name="Hanh N.T.H."/>
            <person name="Webby R.J."/>
            <person name="Poon L.L.M."/>
            <person name="Chen H."/>
            <person name="Shortridge K.F."/>
            <person name="Yuen K.Y."/>
            <person name="Webster R.G."/>
            <person name="Peiris J.S.M."/>
        </authorList>
    </citation>
    <scope>NUCLEOTIDE SEQUENCE [GENOMIC RNA]</scope>
</reference>
<feature type="chain" id="PRO_0000311649" description="Protein PB1-F2">
    <location>
        <begin position="1"/>
        <end position="90"/>
    </location>
</feature>
<feature type="region of interest" description="Disordered" evidence="2">
    <location>
        <begin position="1"/>
        <end position="34"/>
    </location>
</feature>
<feature type="region of interest" description="Mitochondrial targeting sequence" evidence="1">
    <location>
        <begin position="65"/>
        <end position="87"/>
    </location>
</feature>
<feature type="compositionally biased region" description="Polar residues" evidence="2">
    <location>
        <begin position="1"/>
        <end position="28"/>
    </location>
</feature>
<feature type="site" description="Low pathogenicity" evidence="1">
    <location>
        <position position="66"/>
    </location>
</feature>
<sequence length="90" mass="10917">MEQGQDTPWTQSTEHTNIQKRGSGQQTQRLEHPNSTRLMDHYLRIMSPVGMHKQIVYWKQWLSLKNPTQESLKTRVLKRWKLFNKQEWIN</sequence>
<evidence type="ECO:0000255" key="1">
    <source>
        <dbReference type="HAMAP-Rule" id="MF_04064"/>
    </source>
</evidence>
<evidence type="ECO:0000256" key="2">
    <source>
        <dbReference type="SAM" id="MobiDB-lite"/>
    </source>
</evidence>
<organism>
    <name type="scientific">Influenza A virus (strain A/Chicken/Shantou/4231/2003 H5N1 genotype V)</name>
    <dbReference type="NCBI Taxonomy" id="284184"/>
    <lineage>
        <taxon>Viruses</taxon>
        <taxon>Riboviria</taxon>
        <taxon>Orthornavirae</taxon>
        <taxon>Negarnaviricota</taxon>
        <taxon>Polyploviricotina</taxon>
        <taxon>Insthoviricetes</taxon>
        <taxon>Articulavirales</taxon>
        <taxon>Orthomyxoviridae</taxon>
        <taxon>Alphainfluenzavirus</taxon>
        <taxon>Alphainfluenzavirus influenzae</taxon>
        <taxon>Influenza A virus</taxon>
    </lineage>
</organism>
<gene>
    <name evidence="1" type="primary">PB1</name>
</gene>
<dbReference type="EMBL" id="AY651697">
    <property type="status" value="NOT_ANNOTATED_CDS"/>
    <property type="molecule type" value="Genomic_RNA"/>
</dbReference>
<dbReference type="SMR" id="P0C5V8"/>
<dbReference type="GO" id="GO:0044164">
    <property type="term" value="C:host cell cytosol"/>
    <property type="evidence" value="ECO:0007669"/>
    <property type="project" value="UniProtKB-SubCell"/>
</dbReference>
<dbReference type="GO" id="GO:0044192">
    <property type="term" value="C:host cell mitochondrial inner membrane"/>
    <property type="evidence" value="ECO:0007669"/>
    <property type="project" value="UniProtKB-SubCell"/>
</dbReference>
<dbReference type="GO" id="GO:0042025">
    <property type="term" value="C:host cell nucleus"/>
    <property type="evidence" value="ECO:0007669"/>
    <property type="project" value="UniProtKB-SubCell"/>
</dbReference>
<dbReference type="GO" id="GO:0016020">
    <property type="term" value="C:membrane"/>
    <property type="evidence" value="ECO:0007669"/>
    <property type="project" value="UniProtKB-UniRule"/>
</dbReference>
<dbReference type="GO" id="GO:0052150">
    <property type="term" value="P:symbiont-mediated perturbation of host apoptosis"/>
    <property type="evidence" value="ECO:0007669"/>
    <property type="project" value="UniProtKB-KW"/>
</dbReference>
<dbReference type="GO" id="GO:0039545">
    <property type="term" value="P:symbiont-mediated suppression of host cytoplasmic pattern recognition receptor signaling pathway via inhibition of MAVS activity"/>
    <property type="evidence" value="ECO:0007669"/>
    <property type="project" value="UniProtKB-KW"/>
</dbReference>
<dbReference type="HAMAP" id="MF_04064">
    <property type="entry name" value="INFV_PB1F2"/>
    <property type="match status" value="1"/>
</dbReference>
<dbReference type="InterPro" id="IPR021045">
    <property type="entry name" value="Flu_proapoptotic_PB1-F2"/>
</dbReference>
<dbReference type="Pfam" id="PF11986">
    <property type="entry name" value="PB1-F2"/>
    <property type="match status" value="1"/>
</dbReference>
<keyword id="KW-0053">Apoptosis</keyword>
<keyword id="KW-1035">Host cytoplasm</keyword>
<keyword id="KW-1043">Host membrane</keyword>
<keyword id="KW-1045">Host mitochondrion</keyword>
<keyword id="KW-1046">Host mitochondrion inner membrane</keyword>
<keyword id="KW-1048">Host nucleus</keyword>
<keyword id="KW-0945">Host-virus interaction</keyword>
<keyword id="KW-1090">Inhibition of host innate immune response by virus</keyword>
<keyword id="KW-1097">Inhibition of host MAVS by virus</keyword>
<keyword id="KW-1113">Inhibition of host RLR pathway by virus</keyword>
<keyword id="KW-0472">Membrane</keyword>
<keyword id="KW-1119">Modulation of host cell apoptosis by virus</keyword>
<keyword id="KW-0899">Viral immunoevasion</keyword>
<comment type="function">
    <text evidence="1">Plays an important role in promoting lung pathology in both primary viral infection and secondary bacterial infection. Promotes alteration of mitochondrial morphology, dissipation of mitochondrial membrane potential, and cell death. Alternatively, inhibits the production of interferon in the infected cell at the level of host mitochondrial antiviral signaling MAVS. Its level of expression differs greatly depending on which cell type is infected, in a manner that is independent of the levels of expression of other viral proteins. Monocytic cells are more affected than epithelial cells. Seems to disable virus-infected monocytes or other host innate immune cells. During early stage of infection, predisposes the mitochondria to permeability transition through interaction with host SLC25A6/ANT3 and VDAC1. These proteins participate in the formation of the permeability transition pore complex (PTPC) responsible of the release of mitochondrial products that triggers apoptosis.</text>
</comment>
<comment type="subunit">
    <text evidence="1">Oligomer. Interacts with human SLC25A6/ANT3 and VDAC1. Interacts with host MAVS.</text>
</comment>
<comment type="subcellular location">
    <subcellularLocation>
        <location evidence="1">Host mitochondrion inner membrane</location>
    </subcellularLocation>
    <subcellularLocation>
        <location evidence="1">Host nucleus</location>
    </subcellularLocation>
    <subcellularLocation>
        <location evidence="1">Host cytoplasm</location>
        <location evidence="1">Host cytosol</location>
    </subcellularLocation>
    <text evidence="1">Inner mitochondrial membrane in most cells types. Otherwise is detected in the nucleus and cytosol.</text>
</comment>
<comment type="miscellaneous">
    <text>Is not encoded in all strains, and seems to be dispensable for replication.</text>
</comment>
<comment type="similarity">
    <text evidence="1">Belongs to the influenza viruses PB1-F2 family.</text>
</comment>